<proteinExistence type="inferred from homology"/>
<accession>P63390</accession>
<accession>P45535</accession>
<name>YHES_ECO57</name>
<evidence type="ECO:0000250" key="1">
    <source>
        <dbReference type="UniProtKB" id="A0A0H2VBH0"/>
    </source>
</evidence>
<evidence type="ECO:0000255" key="2">
    <source>
        <dbReference type="PROSITE-ProRule" id="PRU00434"/>
    </source>
</evidence>
<evidence type="ECO:0000256" key="3">
    <source>
        <dbReference type="SAM" id="MobiDB-lite"/>
    </source>
</evidence>
<evidence type="ECO:0000305" key="4"/>
<sequence>MIVFSSLQIRRGVRVLLDNATATINPGQKVGLVGKNGCGKSTLLALLKNEISADGGSYTFPGSWQLAWVNQETPALPQAALEYVIDGDREYRQLEAQLHDANERNDGHAIATIHGKLDAIDAWSIRSRAASLLHGLGFSNEQLERPVSDFSGGWRMRLNLAQALICRSDLLLLDEPTNHLDLDAVIWLEKWLKSYQGTLILISHDRDFLDPIVDKIIHIEQQSMFEYTGNYSSFEVQRATRLAQQQAMYESQQERVAHLQSYIDRFRAKATKAKQAQSRIKMLERMELIAPAHVDNPFRFSFRAPESLPNPLLKMEKVSAGYGDRIILDSIKLNLVPGSRIGLLGRNGAGKSTLIKLLAGELAPVSGEIGLAKGIKLGYFAQHQLEYLRADESPIQHLARLAPQELEQKLRDYLGGFGFQGDKVTEETRRFSGGEKARLVLALIVWQRPNLLLLDEPTNHLDLDMRQALTEALIEFEGALVVVSHDRHLLRSTTDDLYLVHDRKVEPFDGDLEDYQQWLSDVQKQENQTDEAPKENANSAQARKDQKRREAELRAQTQPLRKEIARLEKEMEKLNAQLAQAEEKLGDSELYDQSRKAELTACLQQQASAKSGLEECEMAWLEAQEQLEQMLLEGQSN</sequence>
<protein>
    <recommendedName>
        <fullName>Probable ATP-binding protein YheS</fullName>
    </recommendedName>
</protein>
<feature type="chain" id="PRO_0000093188" description="Probable ATP-binding protein YheS">
    <location>
        <begin position="1"/>
        <end position="637"/>
    </location>
</feature>
<feature type="domain" description="ABC transporter 1" evidence="2">
    <location>
        <begin position="2"/>
        <end position="246"/>
    </location>
</feature>
<feature type="domain" description="ABC transporter 2" evidence="2">
    <location>
        <begin position="313"/>
        <end position="527"/>
    </location>
</feature>
<feature type="region of interest" description="Disordered" evidence="3">
    <location>
        <begin position="523"/>
        <end position="559"/>
    </location>
</feature>
<feature type="compositionally biased region" description="Basic and acidic residues" evidence="3">
    <location>
        <begin position="542"/>
        <end position="553"/>
    </location>
</feature>
<feature type="binding site" evidence="2">
    <location>
        <begin position="34"/>
        <end position="41"/>
    </location>
    <ligand>
        <name>ATP</name>
        <dbReference type="ChEBI" id="CHEBI:30616"/>
        <label>1</label>
    </ligand>
</feature>
<feature type="binding site" evidence="2">
    <location>
        <begin position="345"/>
        <end position="352"/>
    </location>
    <ligand>
        <name>ATP</name>
        <dbReference type="ChEBI" id="CHEBI:30616"/>
        <label>2</label>
    </ligand>
</feature>
<reference key="1">
    <citation type="journal article" date="2001" name="Nature">
        <title>Genome sequence of enterohaemorrhagic Escherichia coli O157:H7.</title>
        <authorList>
            <person name="Perna N.T."/>
            <person name="Plunkett G. III"/>
            <person name="Burland V."/>
            <person name="Mau B."/>
            <person name="Glasner J.D."/>
            <person name="Rose D.J."/>
            <person name="Mayhew G.F."/>
            <person name="Evans P.S."/>
            <person name="Gregor J."/>
            <person name="Kirkpatrick H.A."/>
            <person name="Posfai G."/>
            <person name="Hackett J."/>
            <person name="Klink S."/>
            <person name="Boutin A."/>
            <person name="Shao Y."/>
            <person name="Miller L."/>
            <person name="Grotbeck E.J."/>
            <person name="Davis N.W."/>
            <person name="Lim A."/>
            <person name="Dimalanta E.T."/>
            <person name="Potamousis K."/>
            <person name="Apodaca J."/>
            <person name="Anantharaman T.S."/>
            <person name="Lin J."/>
            <person name="Yen G."/>
            <person name="Schwartz D.C."/>
            <person name="Welch R.A."/>
            <person name="Blattner F.R."/>
        </authorList>
    </citation>
    <scope>NUCLEOTIDE SEQUENCE [LARGE SCALE GENOMIC DNA]</scope>
    <source>
        <strain>O157:H7 / EDL933 / ATCC 700927 / EHEC</strain>
    </source>
</reference>
<reference key="2">
    <citation type="journal article" date="2001" name="DNA Res.">
        <title>Complete genome sequence of enterohemorrhagic Escherichia coli O157:H7 and genomic comparison with a laboratory strain K-12.</title>
        <authorList>
            <person name="Hayashi T."/>
            <person name="Makino K."/>
            <person name="Ohnishi M."/>
            <person name="Kurokawa K."/>
            <person name="Ishii K."/>
            <person name="Yokoyama K."/>
            <person name="Han C.-G."/>
            <person name="Ohtsubo E."/>
            <person name="Nakayama K."/>
            <person name="Murata T."/>
            <person name="Tanaka M."/>
            <person name="Tobe T."/>
            <person name="Iida T."/>
            <person name="Takami H."/>
            <person name="Honda T."/>
            <person name="Sasakawa C."/>
            <person name="Ogasawara N."/>
            <person name="Yasunaga T."/>
            <person name="Kuhara S."/>
            <person name="Shiba T."/>
            <person name="Hattori M."/>
            <person name="Shinagawa H."/>
        </authorList>
    </citation>
    <scope>NUCLEOTIDE SEQUENCE [LARGE SCALE GENOMIC DNA]</scope>
    <source>
        <strain>O157:H7 / Sakai / RIMD 0509952 / EHEC</strain>
    </source>
</reference>
<keyword id="KW-0067">ATP-binding</keyword>
<keyword id="KW-0547">Nucleotide-binding</keyword>
<keyword id="KW-1185">Reference proteome</keyword>
<keyword id="KW-0677">Repeat</keyword>
<organism>
    <name type="scientific">Escherichia coli O157:H7</name>
    <dbReference type="NCBI Taxonomy" id="83334"/>
    <lineage>
        <taxon>Bacteria</taxon>
        <taxon>Pseudomonadati</taxon>
        <taxon>Pseudomonadota</taxon>
        <taxon>Gammaproteobacteria</taxon>
        <taxon>Enterobacterales</taxon>
        <taxon>Enterobacteriaceae</taxon>
        <taxon>Escherichia</taxon>
    </lineage>
</organism>
<dbReference type="EMBL" id="AE005174">
    <property type="protein sequence ID" value="AAG58460.1"/>
    <property type="molecule type" value="Genomic_DNA"/>
</dbReference>
<dbReference type="EMBL" id="BA000007">
    <property type="protein sequence ID" value="BAB37626.1"/>
    <property type="molecule type" value="Genomic_DNA"/>
</dbReference>
<dbReference type="PIR" id="C91154">
    <property type="entry name" value="C91154"/>
</dbReference>
<dbReference type="RefSeq" id="NP_312230.1">
    <property type="nucleotide sequence ID" value="NC_002695.1"/>
</dbReference>
<dbReference type="RefSeq" id="WP_000634798.1">
    <property type="nucleotide sequence ID" value="NZ_VOAI01000004.1"/>
</dbReference>
<dbReference type="SMR" id="P63390"/>
<dbReference type="STRING" id="155864.Z4713"/>
<dbReference type="GeneID" id="915942"/>
<dbReference type="KEGG" id="ece:Z4713"/>
<dbReference type="KEGG" id="ecs:ECs_4203"/>
<dbReference type="PATRIC" id="fig|386585.9.peg.4387"/>
<dbReference type="eggNOG" id="COG0488">
    <property type="taxonomic scope" value="Bacteria"/>
</dbReference>
<dbReference type="HOGENOM" id="CLU_000604_36_0_6"/>
<dbReference type="OMA" id="CTHIADI"/>
<dbReference type="Proteomes" id="UP000000558">
    <property type="component" value="Chromosome"/>
</dbReference>
<dbReference type="Proteomes" id="UP000002519">
    <property type="component" value="Chromosome"/>
</dbReference>
<dbReference type="GO" id="GO:0005524">
    <property type="term" value="F:ATP binding"/>
    <property type="evidence" value="ECO:0007669"/>
    <property type="project" value="UniProtKB-KW"/>
</dbReference>
<dbReference type="GO" id="GO:0016887">
    <property type="term" value="F:ATP hydrolysis activity"/>
    <property type="evidence" value="ECO:0007669"/>
    <property type="project" value="InterPro"/>
</dbReference>
<dbReference type="CDD" id="cd03221">
    <property type="entry name" value="ABCF_EF-3"/>
    <property type="match status" value="2"/>
</dbReference>
<dbReference type="FunFam" id="3.40.50.300:FF:002053">
    <property type="entry name" value="ABC transporter ATP-binding protein"/>
    <property type="match status" value="1"/>
</dbReference>
<dbReference type="FunFam" id="3.40.50.300:FF:000011">
    <property type="entry name" value="Putative ABC transporter ATP-binding component"/>
    <property type="match status" value="1"/>
</dbReference>
<dbReference type="Gene3D" id="3.40.50.300">
    <property type="entry name" value="P-loop containing nucleotide triphosphate hydrolases"/>
    <property type="match status" value="2"/>
</dbReference>
<dbReference type="InterPro" id="IPR003593">
    <property type="entry name" value="AAA+_ATPase"/>
</dbReference>
<dbReference type="InterPro" id="IPR032781">
    <property type="entry name" value="ABC_tran_Xtn"/>
</dbReference>
<dbReference type="InterPro" id="IPR003439">
    <property type="entry name" value="ABC_transporter-like_ATP-bd"/>
</dbReference>
<dbReference type="InterPro" id="IPR017871">
    <property type="entry name" value="ABC_transporter-like_CS"/>
</dbReference>
<dbReference type="InterPro" id="IPR050611">
    <property type="entry name" value="ABCF_EF3_subfamily"/>
</dbReference>
<dbReference type="InterPro" id="IPR027417">
    <property type="entry name" value="P-loop_NTPase"/>
</dbReference>
<dbReference type="NCBIfam" id="NF007921">
    <property type="entry name" value="PRK10636.1"/>
    <property type="match status" value="1"/>
</dbReference>
<dbReference type="PANTHER" id="PTHR19211:SF14">
    <property type="entry name" value="ATP-BINDING CASSETTE SUB-FAMILY F MEMBER 1"/>
    <property type="match status" value="1"/>
</dbReference>
<dbReference type="PANTHER" id="PTHR19211">
    <property type="entry name" value="ATP-BINDING TRANSPORT PROTEIN-RELATED"/>
    <property type="match status" value="1"/>
</dbReference>
<dbReference type="Pfam" id="PF00005">
    <property type="entry name" value="ABC_tran"/>
    <property type="match status" value="2"/>
</dbReference>
<dbReference type="Pfam" id="PF12848">
    <property type="entry name" value="ABC_tran_Xtn"/>
    <property type="match status" value="1"/>
</dbReference>
<dbReference type="SMART" id="SM00382">
    <property type="entry name" value="AAA"/>
    <property type="match status" value="2"/>
</dbReference>
<dbReference type="SUPFAM" id="SSF52540">
    <property type="entry name" value="P-loop containing nucleoside triphosphate hydrolases"/>
    <property type="match status" value="2"/>
</dbReference>
<dbReference type="PROSITE" id="PS00211">
    <property type="entry name" value="ABC_TRANSPORTER_1"/>
    <property type="match status" value="2"/>
</dbReference>
<dbReference type="PROSITE" id="PS50893">
    <property type="entry name" value="ABC_TRANSPORTER_2"/>
    <property type="match status" value="2"/>
</dbReference>
<comment type="function">
    <text evidence="1">Genetic data indicate it may be involved in ribosome assembly or function.</text>
</comment>
<comment type="similarity">
    <text evidence="4">Belongs to the ABC transporter superfamily. ABCF family. YheS subfamily.</text>
</comment>
<gene>
    <name type="primary">yheS</name>
    <name type="ordered locus">Z4713</name>
    <name type="ordered locus">ECs4203</name>
</gene>